<name>Y5613_ARATH</name>
<organism>
    <name type="scientific">Arabidopsis thaliana</name>
    <name type="common">Mouse-ear cress</name>
    <dbReference type="NCBI Taxonomy" id="3702"/>
    <lineage>
        <taxon>Eukaryota</taxon>
        <taxon>Viridiplantae</taxon>
        <taxon>Streptophyta</taxon>
        <taxon>Embryophyta</taxon>
        <taxon>Tracheophyta</taxon>
        <taxon>Spermatophyta</taxon>
        <taxon>Magnoliopsida</taxon>
        <taxon>eudicotyledons</taxon>
        <taxon>Gunneridae</taxon>
        <taxon>Pentapetalae</taxon>
        <taxon>rosids</taxon>
        <taxon>malvids</taxon>
        <taxon>Brassicales</taxon>
        <taxon>Brassicaceae</taxon>
        <taxon>Camelineae</taxon>
        <taxon>Arabidopsis</taxon>
    </lineage>
</organism>
<comment type="subcellular location">
    <subcellularLocation>
        <location evidence="4">Membrane</location>
        <topology evidence="4">Single-pass type I membrane protein</topology>
    </subcellularLocation>
</comment>
<comment type="similarity">
    <text evidence="2">Belongs to the protein kinase superfamily. Ser/Thr protein kinase family.</text>
</comment>
<protein>
    <recommendedName>
        <fullName>Probable receptor-like protein kinase At5g61350</fullName>
        <ecNumber>2.7.11.-</ecNumber>
    </recommendedName>
</protein>
<accession>Q9FLJ8</accession>
<sequence length="842" mass="92687">MGGDFRHFSSHVSLLLLFLLIVKSSSSFTPADNYLIDCGSSDETKLSDGRNFKSDQQSVAFLQTDEDIKTSVDSIPITDSNASTLPLYLTARIFAGKSTYSFYISRPGRHWIRLHFYPLNHPLYNLTNSVFSVTTDTTVLLHDFSAGDTSSIVFKEYLIYAAEKLSLYFKPHKGSTAFINAVEIVSVPDELVPDSASSVPQAPDFKGLSSFSLEILHRINIGGDLISPKIDPLSRTWLSDKPYNTFPEGSRNVTVDPSTITYPDGGATALIAPNPVYATAEEMADAQTSQPNFNLSWRMSVDFGHDYFIRLHFCDIVSKSLNDLIFNVFINKLSAISALDLSSLTSALGTAYYADFVLNASTITNGSILVQVGPTPNLQSGKPNAILNGLEIMKLNNAAGSLDGLFGVDGKYKGPIGGMSSKKLAIAGIGFVMALTAFLGVVVLLVRWQRRPKDWQKQNSFSSWLLPLHASHSSYISSKGGSTSRRMSIFGSKKSKSNGFSSFFSNQGLGRYFPFTELQTATQNFDENAVCGVGGFGKVYIGEIDGGTQVAIKRGSQSSEQGINEFQTEIQMLSKLRHRHLVSLIGFCDENKEMILVYEYMSNGPLRDHLYGSKENDPNPIPTLSWKQRLEICIGSARGLHYLHTGAAQGIIHRDVKTTNILLDENLVAKVSDFGLSKDAPMDEGHVSTAVKGSFGYLDPEYFRRQQLTDKSDVYSFGVVLFEVLCARPVINPQLPREQVNLAEYAMNLHRKGMLEKIIDPKIVGTISKGSLRKFVEAAEKCLAEYGVDRPGMGDVLWNLEYALQLQEASAQVDLSEDKTTMNIEMDLIPGEEMQSPSHSIP</sequence>
<dbReference type="EC" id="2.7.11.-"/>
<dbReference type="EMBL" id="AB010073">
    <property type="protein sequence ID" value="BAB08490.1"/>
    <property type="molecule type" value="Genomic_DNA"/>
</dbReference>
<dbReference type="EMBL" id="CP002688">
    <property type="protein sequence ID" value="AED97457.1"/>
    <property type="molecule type" value="Genomic_DNA"/>
</dbReference>
<dbReference type="RefSeq" id="NP_200943.1">
    <property type="nucleotide sequence ID" value="NM_125528.2"/>
</dbReference>
<dbReference type="SMR" id="Q9FLJ8"/>
<dbReference type="BioGRID" id="21500">
    <property type="interactions" value="1"/>
</dbReference>
<dbReference type="STRING" id="3702.Q9FLJ8"/>
<dbReference type="GlyGen" id="Q9FLJ8">
    <property type="glycosylation" value="7 sites"/>
</dbReference>
<dbReference type="iPTMnet" id="Q9FLJ8"/>
<dbReference type="PaxDb" id="3702-AT5G61350.1"/>
<dbReference type="ProteomicsDB" id="242834"/>
<dbReference type="EnsemblPlants" id="AT5G61350.1">
    <property type="protein sequence ID" value="AT5G61350.1"/>
    <property type="gene ID" value="AT5G61350"/>
</dbReference>
<dbReference type="GeneID" id="836256"/>
<dbReference type="Gramene" id="AT5G61350.1">
    <property type="protein sequence ID" value="AT5G61350.1"/>
    <property type="gene ID" value="AT5G61350"/>
</dbReference>
<dbReference type="KEGG" id="ath:AT5G61350"/>
<dbReference type="Araport" id="AT5G61350"/>
<dbReference type="TAIR" id="AT5G61350">
    <property type="gene designation" value="CAP1"/>
</dbReference>
<dbReference type="eggNOG" id="KOG1187">
    <property type="taxonomic scope" value="Eukaryota"/>
</dbReference>
<dbReference type="HOGENOM" id="CLU_000288_42_1_1"/>
<dbReference type="InParanoid" id="Q9FLJ8"/>
<dbReference type="OMA" id="FQEESTY"/>
<dbReference type="PhylomeDB" id="Q9FLJ8"/>
<dbReference type="PRO" id="PR:Q9FLJ8"/>
<dbReference type="Proteomes" id="UP000006548">
    <property type="component" value="Chromosome 5"/>
</dbReference>
<dbReference type="ExpressionAtlas" id="Q9FLJ8">
    <property type="expression patterns" value="baseline and differential"/>
</dbReference>
<dbReference type="GO" id="GO:0009705">
    <property type="term" value="C:plant-type vacuole membrane"/>
    <property type="evidence" value="ECO:0000314"/>
    <property type="project" value="TAIR"/>
</dbReference>
<dbReference type="GO" id="GO:0005524">
    <property type="term" value="F:ATP binding"/>
    <property type="evidence" value="ECO:0007669"/>
    <property type="project" value="UniProtKB-KW"/>
</dbReference>
<dbReference type="GO" id="GO:0004672">
    <property type="term" value="F:protein kinase activity"/>
    <property type="evidence" value="ECO:0000314"/>
    <property type="project" value="TAIR"/>
</dbReference>
<dbReference type="GO" id="GO:0004674">
    <property type="term" value="F:protein serine/threonine kinase activity"/>
    <property type="evidence" value="ECO:0007669"/>
    <property type="project" value="UniProtKB-KW"/>
</dbReference>
<dbReference type="GO" id="GO:0004714">
    <property type="term" value="F:transmembrane receptor protein tyrosine kinase activity"/>
    <property type="evidence" value="ECO:0007669"/>
    <property type="project" value="InterPro"/>
</dbReference>
<dbReference type="GO" id="GO:0097275">
    <property type="term" value="P:intracellular ammonium homeostasis"/>
    <property type="evidence" value="ECO:0000315"/>
    <property type="project" value="TAIR"/>
</dbReference>
<dbReference type="GO" id="GO:0051924">
    <property type="term" value="P:regulation of calcium ion transport"/>
    <property type="evidence" value="ECO:0000315"/>
    <property type="project" value="TAIR"/>
</dbReference>
<dbReference type="GO" id="GO:0080147">
    <property type="term" value="P:root hair cell development"/>
    <property type="evidence" value="ECO:0000315"/>
    <property type="project" value="TAIR"/>
</dbReference>
<dbReference type="CDD" id="cd14066">
    <property type="entry name" value="STKc_IRAK"/>
    <property type="match status" value="1"/>
</dbReference>
<dbReference type="FunFam" id="2.60.120.430:FF:000005">
    <property type="entry name" value="Putative receptor-like protein kinase"/>
    <property type="match status" value="1"/>
</dbReference>
<dbReference type="FunFam" id="1.10.510.10:FF:000058">
    <property type="entry name" value="Receptor-like protein kinase FERONIA"/>
    <property type="match status" value="1"/>
</dbReference>
<dbReference type="FunFam" id="2.60.120.430:FF:000001">
    <property type="entry name" value="Receptor-like protein kinase FERONIA"/>
    <property type="match status" value="1"/>
</dbReference>
<dbReference type="FunFam" id="3.30.200.20:FF:000039">
    <property type="entry name" value="receptor-like protein kinase FERONIA"/>
    <property type="match status" value="1"/>
</dbReference>
<dbReference type="Gene3D" id="2.60.120.430">
    <property type="entry name" value="Galactose-binding lectin"/>
    <property type="match status" value="2"/>
</dbReference>
<dbReference type="Gene3D" id="3.30.200.20">
    <property type="entry name" value="Phosphorylase Kinase, domain 1"/>
    <property type="match status" value="1"/>
</dbReference>
<dbReference type="Gene3D" id="1.10.510.10">
    <property type="entry name" value="Transferase(Phosphotransferase) domain 1"/>
    <property type="match status" value="1"/>
</dbReference>
<dbReference type="InterPro" id="IPR045272">
    <property type="entry name" value="ANXUR1/2-like"/>
</dbReference>
<dbReference type="InterPro" id="IPR011009">
    <property type="entry name" value="Kinase-like_dom_sf"/>
</dbReference>
<dbReference type="InterPro" id="IPR024788">
    <property type="entry name" value="Malectin-like_Carb-bd_dom"/>
</dbReference>
<dbReference type="InterPro" id="IPR000719">
    <property type="entry name" value="Prot_kinase_dom"/>
</dbReference>
<dbReference type="InterPro" id="IPR001245">
    <property type="entry name" value="Ser-Thr/Tyr_kinase_cat_dom"/>
</dbReference>
<dbReference type="InterPro" id="IPR008271">
    <property type="entry name" value="Ser/Thr_kinase_AS"/>
</dbReference>
<dbReference type="PANTHER" id="PTHR27003">
    <property type="entry name" value="OS07G0166700 PROTEIN"/>
    <property type="match status" value="1"/>
</dbReference>
<dbReference type="PANTHER" id="PTHR27003:SF296">
    <property type="entry name" value="PROTEIN KINASE DOMAIN-CONTAINING PROTEIN"/>
    <property type="match status" value="1"/>
</dbReference>
<dbReference type="Pfam" id="PF12819">
    <property type="entry name" value="Malectin_like"/>
    <property type="match status" value="1"/>
</dbReference>
<dbReference type="Pfam" id="PF07714">
    <property type="entry name" value="PK_Tyr_Ser-Thr"/>
    <property type="match status" value="1"/>
</dbReference>
<dbReference type="SMART" id="SM00220">
    <property type="entry name" value="S_TKc"/>
    <property type="match status" value="1"/>
</dbReference>
<dbReference type="SUPFAM" id="SSF56112">
    <property type="entry name" value="Protein kinase-like (PK-like)"/>
    <property type="match status" value="1"/>
</dbReference>
<dbReference type="PROSITE" id="PS50011">
    <property type="entry name" value="PROTEIN_KINASE_DOM"/>
    <property type="match status" value="1"/>
</dbReference>
<dbReference type="PROSITE" id="PS00108">
    <property type="entry name" value="PROTEIN_KINASE_ST"/>
    <property type="match status" value="1"/>
</dbReference>
<evidence type="ECO:0000255" key="1"/>
<evidence type="ECO:0000255" key="2">
    <source>
        <dbReference type="PROSITE-ProRule" id="PRU00159"/>
    </source>
</evidence>
<evidence type="ECO:0000255" key="3">
    <source>
        <dbReference type="PROSITE-ProRule" id="PRU10027"/>
    </source>
</evidence>
<evidence type="ECO:0000305" key="4"/>
<gene>
    <name type="ordered locus">At5g61350</name>
    <name type="ORF">MFB13.1</name>
</gene>
<feature type="signal peptide" evidence="1">
    <location>
        <begin position="1"/>
        <end position="27"/>
    </location>
</feature>
<feature type="chain" id="PRO_0000386564" description="Probable receptor-like protein kinase At5g61350">
    <location>
        <begin position="28"/>
        <end position="842"/>
    </location>
</feature>
<feature type="topological domain" description="Extracellular" evidence="1">
    <location>
        <begin position="28"/>
        <end position="425"/>
    </location>
</feature>
<feature type="transmembrane region" description="Helical" evidence="1">
    <location>
        <begin position="426"/>
        <end position="446"/>
    </location>
</feature>
<feature type="topological domain" description="Cytoplasmic" evidence="1">
    <location>
        <begin position="447"/>
        <end position="842"/>
    </location>
</feature>
<feature type="domain" description="Protein kinase" evidence="2">
    <location>
        <begin position="525"/>
        <end position="803"/>
    </location>
</feature>
<feature type="active site" description="Proton acceptor" evidence="2 3">
    <location>
        <position position="655"/>
    </location>
</feature>
<feature type="binding site" evidence="2">
    <location>
        <begin position="531"/>
        <end position="539"/>
    </location>
    <ligand>
        <name>ATP</name>
        <dbReference type="ChEBI" id="CHEBI:30616"/>
    </ligand>
</feature>
<feature type="binding site" evidence="2">
    <location>
        <position position="553"/>
    </location>
    <ligand>
        <name>ATP</name>
        <dbReference type="ChEBI" id="CHEBI:30616"/>
    </ligand>
</feature>
<feature type="glycosylation site" description="N-linked (GlcNAc...) asparagine" evidence="1">
    <location>
        <position position="81"/>
    </location>
</feature>
<feature type="glycosylation site" description="N-linked (GlcNAc...) asparagine" evidence="1">
    <location>
        <position position="125"/>
    </location>
</feature>
<feature type="glycosylation site" description="N-linked (GlcNAc...) asparagine" evidence="1">
    <location>
        <position position="252"/>
    </location>
</feature>
<feature type="glycosylation site" description="N-linked (GlcNAc...) asparagine" evidence="1">
    <location>
        <position position="294"/>
    </location>
</feature>
<feature type="glycosylation site" description="N-linked (GlcNAc...) asparagine" evidence="1">
    <location>
        <position position="359"/>
    </location>
</feature>
<feature type="glycosylation site" description="N-linked (GlcNAc...) asparagine" evidence="1">
    <location>
        <position position="365"/>
    </location>
</feature>
<reference key="1">
    <citation type="journal article" date="1998" name="DNA Res.">
        <title>Structural analysis of Arabidopsis thaliana chromosome 5. IV. Sequence features of the regions of 1,456,315 bp covered by nineteen physically assigned P1 and TAC clones.</title>
        <authorList>
            <person name="Sato S."/>
            <person name="Kaneko T."/>
            <person name="Kotani H."/>
            <person name="Nakamura Y."/>
            <person name="Asamizu E."/>
            <person name="Miyajima N."/>
            <person name="Tabata S."/>
        </authorList>
    </citation>
    <scope>NUCLEOTIDE SEQUENCE [LARGE SCALE GENOMIC DNA]</scope>
    <source>
        <strain>cv. Columbia</strain>
    </source>
</reference>
<reference key="2">
    <citation type="journal article" date="2017" name="Plant J.">
        <title>Araport11: a complete reannotation of the Arabidopsis thaliana reference genome.</title>
        <authorList>
            <person name="Cheng C.Y."/>
            <person name="Krishnakumar V."/>
            <person name="Chan A.P."/>
            <person name="Thibaud-Nissen F."/>
            <person name="Schobel S."/>
            <person name="Town C.D."/>
        </authorList>
    </citation>
    <scope>GENOME REANNOTATION</scope>
    <source>
        <strain>cv. Columbia</strain>
    </source>
</reference>
<reference key="3">
    <citation type="journal article" date="2009" name="Mol. Plant">
        <title>Diverse transcriptional programs associated with environmental stress and hormones in the Arabidopsis receptor-like kinase gene family.</title>
        <authorList>
            <person name="Chae L."/>
            <person name="Sudat S."/>
            <person name="Dudoit S."/>
            <person name="Zhu T."/>
            <person name="Luan S."/>
        </authorList>
    </citation>
    <scope>GENE FAMILY</scope>
</reference>
<keyword id="KW-0067">ATP-binding</keyword>
<keyword id="KW-0325">Glycoprotein</keyword>
<keyword id="KW-0418">Kinase</keyword>
<keyword id="KW-0472">Membrane</keyword>
<keyword id="KW-0547">Nucleotide-binding</keyword>
<keyword id="KW-1185">Reference proteome</keyword>
<keyword id="KW-0723">Serine/threonine-protein kinase</keyword>
<keyword id="KW-0732">Signal</keyword>
<keyword id="KW-0808">Transferase</keyword>
<keyword id="KW-0812">Transmembrane</keyword>
<keyword id="KW-1133">Transmembrane helix</keyword>
<proteinExistence type="evidence at transcript level"/>